<comment type="similarity">
    <text evidence="1">Belongs to the eukaryotic ribosomal protein eS1 family.</text>
</comment>
<sequence>MAEKQKAVAKQEKVAISKRDPWALKKWFSVYAPSYLGGVFLAEVPANEAQKLLMRTLEVSLYDITKDISHLPIKLKFQIHRVEGLKALTRFKGLELTRDYIRSLVRKGTSKVTAITEVKTKDGMVMRIAVLGITTHRIGTAQKSAMRKKMIETLVKKAAELDSGQFLKEILEGTLAADLFIVAKKIAPMRKVEIAKIKVLKYPPEEEQIVVKEAVAEVTSA</sequence>
<organism>
    <name type="scientific">Pyrobaculum aerophilum (strain ATCC 51768 / DSM 7523 / JCM 9630 / CIP 104966 / NBRC 100827 / IM2)</name>
    <dbReference type="NCBI Taxonomy" id="178306"/>
    <lineage>
        <taxon>Archaea</taxon>
        <taxon>Thermoproteota</taxon>
        <taxon>Thermoprotei</taxon>
        <taxon>Thermoproteales</taxon>
        <taxon>Thermoproteaceae</taxon>
        <taxon>Pyrobaculum</taxon>
    </lineage>
</organism>
<accession>Q8ZT21</accession>
<name>RS3A_PYRAE</name>
<proteinExistence type="inferred from homology"/>
<reference key="1">
    <citation type="journal article" date="2002" name="Proc. Natl. Acad. Sci. U.S.A.">
        <title>Genome sequence of the hyperthermophilic crenarchaeon Pyrobaculum aerophilum.</title>
        <authorList>
            <person name="Fitz-Gibbon S.T."/>
            <person name="Ladner H."/>
            <person name="Kim U.-J."/>
            <person name="Stetter K.O."/>
            <person name="Simon M.I."/>
            <person name="Miller J.H."/>
        </authorList>
    </citation>
    <scope>NUCLEOTIDE SEQUENCE [LARGE SCALE GENOMIC DNA]</scope>
    <source>
        <strain>ATCC 51768 / DSM 7523 / JCM 9630 / CIP 104966 / NBRC 100827 / IM2</strain>
    </source>
</reference>
<dbReference type="EMBL" id="AE009441">
    <property type="protein sequence ID" value="AAL64942.1"/>
    <property type="molecule type" value="Genomic_DNA"/>
</dbReference>
<dbReference type="RefSeq" id="WP_011009409.1">
    <property type="nucleotide sequence ID" value="NC_003364.1"/>
</dbReference>
<dbReference type="SMR" id="Q8ZT21"/>
<dbReference type="FunCoup" id="Q8ZT21">
    <property type="interactions" value="163"/>
</dbReference>
<dbReference type="STRING" id="178306.PAE3472"/>
<dbReference type="EnsemblBacteria" id="AAL64942">
    <property type="protein sequence ID" value="AAL64942"/>
    <property type="gene ID" value="PAE3472"/>
</dbReference>
<dbReference type="GeneID" id="1466072"/>
<dbReference type="KEGG" id="pai:PAE3472"/>
<dbReference type="PATRIC" id="fig|178306.9.peg.2614"/>
<dbReference type="eggNOG" id="arCOG04186">
    <property type="taxonomic scope" value="Archaea"/>
</dbReference>
<dbReference type="HOGENOM" id="CLU_062507_1_0_2"/>
<dbReference type="InParanoid" id="Q8ZT21"/>
<dbReference type="Proteomes" id="UP000002439">
    <property type="component" value="Chromosome"/>
</dbReference>
<dbReference type="GO" id="GO:0005829">
    <property type="term" value="C:cytosol"/>
    <property type="evidence" value="ECO:0000318"/>
    <property type="project" value="GO_Central"/>
</dbReference>
<dbReference type="GO" id="GO:1990904">
    <property type="term" value="C:ribonucleoprotein complex"/>
    <property type="evidence" value="ECO:0007669"/>
    <property type="project" value="UniProtKB-KW"/>
</dbReference>
<dbReference type="GO" id="GO:0005840">
    <property type="term" value="C:ribosome"/>
    <property type="evidence" value="ECO:0007669"/>
    <property type="project" value="UniProtKB-KW"/>
</dbReference>
<dbReference type="GO" id="GO:0003735">
    <property type="term" value="F:structural constituent of ribosome"/>
    <property type="evidence" value="ECO:0007669"/>
    <property type="project" value="InterPro"/>
</dbReference>
<dbReference type="GO" id="GO:0006412">
    <property type="term" value="P:translation"/>
    <property type="evidence" value="ECO:0007669"/>
    <property type="project" value="UniProtKB-UniRule"/>
</dbReference>
<dbReference type="HAMAP" id="MF_00359">
    <property type="entry name" value="Ribosomal_eS1"/>
    <property type="match status" value="1"/>
</dbReference>
<dbReference type="InterPro" id="IPR001593">
    <property type="entry name" value="Ribosomal_eS1"/>
</dbReference>
<dbReference type="InterPro" id="IPR030838">
    <property type="entry name" value="Ribosomal_eS1_arc"/>
</dbReference>
<dbReference type="NCBIfam" id="NF003142">
    <property type="entry name" value="PRK04057.1"/>
    <property type="match status" value="1"/>
</dbReference>
<dbReference type="PANTHER" id="PTHR11830">
    <property type="entry name" value="40S RIBOSOMAL PROTEIN S3A"/>
    <property type="match status" value="1"/>
</dbReference>
<dbReference type="Pfam" id="PF01015">
    <property type="entry name" value="Ribosomal_S3Ae"/>
    <property type="match status" value="1"/>
</dbReference>
<dbReference type="SMART" id="SM01397">
    <property type="entry name" value="Ribosomal_S3Ae"/>
    <property type="match status" value="1"/>
</dbReference>
<gene>
    <name evidence="1" type="primary">rps3ae</name>
    <name type="ordered locus">PAE3472</name>
</gene>
<protein>
    <recommendedName>
        <fullName evidence="1">Small ribosomal subunit protein eS1</fullName>
    </recommendedName>
    <alternativeName>
        <fullName evidence="2">30S ribosomal protein S3Ae</fullName>
    </alternativeName>
    <alternativeName>
        <fullName evidence="1">Ribosomal protein S1e</fullName>
    </alternativeName>
</protein>
<evidence type="ECO:0000255" key="1">
    <source>
        <dbReference type="HAMAP-Rule" id="MF_00359"/>
    </source>
</evidence>
<evidence type="ECO:0000305" key="2"/>
<feature type="chain" id="PRO_0000153556" description="Small ribosomal subunit protein eS1">
    <location>
        <begin position="1"/>
        <end position="221"/>
    </location>
</feature>
<keyword id="KW-1185">Reference proteome</keyword>
<keyword id="KW-0687">Ribonucleoprotein</keyword>
<keyword id="KW-0689">Ribosomal protein</keyword>